<proteinExistence type="inferred from homology"/>
<keyword id="KW-0056">Arginine metabolism</keyword>
<keyword id="KW-0378">Hydrolase</keyword>
<keyword id="KW-1185">Reference proteome</keyword>
<name>ASTB_NOVAD</name>
<protein>
    <recommendedName>
        <fullName evidence="1">N-succinylarginine dihydrolase</fullName>
        <ecNumber evidence="1">3.5.3.23</ecNumber>
    </recommendedName>
</protein>
<comment type="function">
    <text evidence="1">Catalyzes the hydrolysis of N(2)-succinylarginine into N(2)-succinylornithine, ammonia and CO(2).</text>
</comment>
<comment type="catalytic activity">
    <reaction evidence="1">
        <text>N(2)-succinyl-L-arginine + 2 H2O + 2 H(+) = N(2)-succinyl-L-ornithine + 2 NH4(+) + CO2</text>
        <dbReference type="Rhea" id="RHEA:19533"/>
        <dbReference type="ChEBI" id="CHEBI:15377"/>
        <dbReference type="ChEBI" id="CHEBI:15378"/>
        <dbReference type="ChEBI" id="CHEBI:16526"/>
        <dbReference type="ChEBI" id="CHEBI:28938"/>
        <dbReference type="ChEBI" id="CHEBI:58241"/>
        <dbReference type="ChEBI" id="CHEBI:58514"/>
        <dbReference type="EC" id="3.5.3.23"/>
    </reaction>
</comment>
<comment type="pathway">
    <text evidence="1">Amino-acid degradation; L-arginine degradation via AST pathway; L-glutamate and succinate from L-arginine: step 2/5.</text>
</comment>
<comment type="subunit">
    <text evidence="1">Homodimer.</text>
</comment>
<comment type="similarity">
    <text evidence="1">Belongs to the succinylarginine dihydrolase family.</text>
</comment>
<gene>
    <name evidence="1" type="primary">astB</name>
    <name type="ordered locus">Saro_0882</name>
</gene>
<reference key="1">
    <citation type="submission" date="2006-01" db="EMBL/GenBank/DDBJ databases">
        <title>Complete sequence of Novosphingobium aromaticivorans DSM 12444.</title>
        <authorList>
            <consortium name="US DOE Joint Genome Institute"/>
            <person name="Copeland A."/>
            <person name="Lucas S."/>
            <person name="Lapidus A."/>
            <person name="Barry K."/>
            <person name="Detter J.C."/>
            <person name="Glavina T."/>
            <person name="Hammon N."/>
            <person name="Israni S."/>
            <person name="Pitluck S."/>
            <person name="Chain P."/>
            <person name="Malfatti S."/>
            <person name="Shin M."/>
            <person name="Vergez L."/>
            <person name="Schmutz J."/>
            <person name="Larimer F."/>
            <person name="Land M."/>
            <person name="Kyrpides N."/>
            <person name="Ivanova N."/>
            <person name="Fredrickson J."/>
            <person name="Balkwill D."/>
            <person name="Romine M.F."/>
            <person name="Richardson P."/>
        </authorList>
    </citation>
    <scope>NUCLEOTIDE SEQUENCE [LARGE SCALE GENOMIC DNA]</scope>
    <source>
        <strain>ATCC 700278 / DSM 12444 / CCUG 56034 / CIP 105152 / NBRC 16084 / F199</strain>
    </source>
</reference>
<organism>
    <name type="scientific">Novosphingobium aromaticivorans (strain ATCC 700278 / DSM 12444 / CCUG 56034 / CIP 105152 / NBRC 16084 / F199)</name>
    <dbReference type="NCBI Taxonomy" id="279238"/>
    <lineage>
        <taxon>Bacteria</taxon>
        <taxon>Pseudomonadati</taxon>
        <taxon>Pseudomonadota</taxon>
        <taxon>Alphaproteobacteria</taxon>
        <taxon>Sphingomonadales</taxon>
        <taxon>Sphingomonadaceae</taxon>
        <taxon>Novosphingobium</taxon>
    </lineage>
</organism>
<sequence>MPLVEINFDGLVGPSHNYAGLSLGNLASASNAGEVSYPRAAALQGLGKMRHNLALGLTQGLFAPLPRPNPVFLGALGLNAIDEVDQAQRRLRAAAWSASSMWTANAATVSPAPDTPDGRCHLTAANLVTMPHRSQEWPDTVRQLRLAFADAAHFAVHDAVPACFGDEGAANHMRMCKSHDAPGIEIFVYGTTGGAFPARQHEQASRAVARLHGLAPERCLFVEQAPEAIAAGAFHNDVVAVANERVLFTHEQAFANPEATYAAIRERLPEAEIVVVPSSVVSLADAIRSYLFNAQLLTLPSGEMGLVIPVEAWETPSVRGWLEAHLASNGPIRRVLPVDVRQSMANGGGPACLRLRVVADPATVDPRFLLDEARVAIVEEVVRRHWPEQIDPADLGSDILAQTVHGARGALLAALELSELA</sequence>
<feature type="chain" id="PRO_0000262360" description="N-succinylarginine dihydrolase">
    <location>
        <begin position="1"/>
        <end position="421"/>
    </location>
</feature>
<feature type="active site" evidence="1">
    <location>
        <position position="167"/>
    </location>
</feature>
<feature type="active site" evidence="1">
    <location>
        <position position="235"/>
    </location>
</feature>
<feature type="active site" description="Nucleophile" evidence="1">
    <location>
        <position position="352"/>
    </location>
</feature>
<feature type="binding site" evidence="1">
    <location>
        <begin position="19"/>
        <end position="28"/>
    </location>
    <ligand>
        <name>substrate</name>
    </ligand>
</feature>
<feature type="binding site" evidence="1">
    <location>
        <position position="105"/>
    </location>
    <ligand>
        <name>substrate</name>
    </ligand>
</feature>
<feature type="binding site" evidence="1">
    <location>
        <begin position="132"/>
        <end position="133"/>
    </location>
    <ligand>
        <name>substrate</name>
    </ligand>
</feature>
<feature type="binding site" evidence="1">
    <location>
        <position position="199"/>
    </location>
    <ligand>
        <name>substrate</name>
    </ligand>
</feature>
<feature type="binding site" evidence="1">
    <location>
        <position position="237"/>
    </location>
    <ligand>
        <name>substrate</name>
    </ligand>
</feature>
<feature type="binding site" evidence="1">
    <location>
        <position position="346"/>
    </location>
    <ligand>
        <name>substrate</name>
    </ligand>
</feature>
<evidence type="ECO:0000255" key="1">
    <source>
        <dbReference type="HAMAP-Rule" id="MF_01172"/>
    </source>
</evidence>
<dbReference type="EC" id="3.5.3.23" evidence="1"/>
<dbReference type="EMBL" id="CP000248">
    <property type="protein sequence ID" value="ABD25327.1"/>
    <property type="molecule type" value="Genomic_DNA"/>
</dbReference>
<dbReference type="RefSeq" id="WP_011444541.1">
    <property type="nucleotide sequence ID" value="NC_007794.1"/>
</dbReference>
<dbReference type="SMR" id="Q2G9Z6"/>
<dbReference type="STRING" id="279238.Saro_0882"/>
<dbReference type="KEGG" id="nar:Saro_0882"/>
<dbReference type="eggNOG" id="COG3724">
    <property type="taxonomic scope" value="Bacteria"/>
</dbReference>
<dbReference type="HOGENOM" id="CLU_053835_0_0_5"/>
<dbReference type="UniPathway" id="UPA00185">
    <property type="reaction ID" value="UER00280"/>
</dbReference>
<dbReference type="Proteomes" id="UP000009134">
    <property type="component" value="Chromosome"/>
</dbReference>
<dbReference type="GO" id="GO:0009015">
    <property type="term" value="F:N-succinylarginine dihydrolase activity"/>
    <property type="evidence" value="ECO:0007669"/>
    <property type="project" value="UniProtKB-UniRule"/>
</dbReference>
<dbReference type="GO" id="GO:0019544">
    <property type="term" value="P:arginine catabolic process to glutamate"/>
    <property type="evidence" value="ECO:0007669"/>
    <property type="project" value="UniProtKB-UniRule"/>
</dbReference>
<dbReference type="GO" id="GO:0019545">
    <property type="term" value="P:arginine catabolic process to succinate"/>
    <property type="evidence" value="ECO:0007669"/>
    <property type="project" value="UniProtKB-UniRule"/>
</dbReference>
<dbReference type="Gene3D" id="3.75.10.20">
    <property type="entry name" value="Succinylarginine dihydrolase"/>
    <property type="match status" value="1"/>
</dbReference>
<dbReference type="HAMAP" id="MF_01172">
    <property type="entry name" value="AstB"/>
    <property type="match status" value="1"/>
</dbReference>
<dbReference type="InterPro" id="IPR037031">
    <property type="entry name" value="AstB_sf"/>
</dbReference>
<dbReference type="InterPro" id="IPR007079">
    <property type="entry name" value="SuccinylArg_d-Hdrlase_AstB"/>
</dbReference>
<dbReference type="NCBIfam" id="NF009789">
    <property type="entry name" value="PRK13281.1"/>
    <property type="match status" value="1"/>
</dbReference>
<dbReference type="PANTHER" id="PTHR30420">
    <property type="entry name" value="N-SUCCINYLARGININE DIHYDROLASE"/>
    <property type="match status" value="1"/>
</dbReference>
<dbReference type="PANTHER" id="PTHR30420:SF2">
    <property type="entry name" value="N-SUCCINYLARGININE DIHYDROLASE"/>
    <property type="match status" value="1"/>
</dbReference>
<dbReference type="Pfam" id="PF04996">
    <property type="entry name" value="AstB"/>
    <property type="match status" value="1"/>
</dbReference>
<dbReference type="SUPFAM" id="SSF55909">
    <property type="entry name" value="Pentein"/>
    <property type="match status" value="1"/>
</dbReference>
<accession>Q2G9Z6</accession>